<keyword id="KW-0030">Aminoacyl-tRNA synthetase</keyword>
<keyword id="KW-0067">ATP-binding</keyword>
<keyword id="KW-0436">Ligase</keyword>
<keyword id="KW-0547">Nucleotide-binding</keyword>
<keyword id="KW-0648">Protein biosynthesis</keyword>
<keyword id="KW-1185">Reference proteome</keyword>
<evidence type="ECO:0000250" key="1">
    <source>
        <dbReference type="UniProtKB" id="P00962"/>
    </source>
</evidence>
<evidence type="ECO:0000250" key="2">
    <source>
        <dbReference type="UniProtKB" id="P47897"/>
    </source>
</evidence>
<evidence type="ECO:0000256" key="3">
    <source>
        <dbReference type="SAM" id="MobiDB-lite"/>
    </source>
</evidence>
<evidence type="ECO:0000305" key="4"/>
<evidence type="ECO:0000312" key="5">
    <source>
        <dbReference type="FlyBase" id="FBgn0027090"/>
    </source>
</evidence>
<feature type="chain" id="PRO_0000195863" description="Probable glutamine--tRNA ligase">
    <location>
        <begin position="1"/>
        <end position="778"/>
    </location>
</feature>
<feature type="region of interest" description="Disordered" evidence="3">
    <location>
        <begin position="188"/>
        <end position="219"/>
    </location>
</feature>
<feature type="short sequence motif" description="'HIGH' region">
    <location>
        <begin position="273"/>
        <end position="283"/>
    </location>
</feature>
<feature type="short sequence motif" description="'KMSKS' region">
    <location>
        <begin position="496"/>
        <end position="500"/>
    </location>
</feature>
<feature type="compositionally biased region" description="Basic and acidic residues" evidence="3">
    <location>
        <begin position="188"/>
        <end position="205"/>
    </location>
</feature>
<feature type="binding site" evidence="1">
    <location>
        <begin position="274"/>
        <end position="276"/>
    </location>
    <ligand>
        <name>ATP</name>
        <dbReference type="ChEBI" id="CHEBI:30616"/>
    </ligand>
</feature>
<feature type="binding site" evidence="1">
    <location>
        <begin position="280"/>
        <end position="286"/>
    </location>
    <ligand>
        <name>ATP</name>
        <dbReference type="ChEBI" id="CHEBI:30616"/>
    </ligand>
</feature>
<feature type="binding site" evidence="1">
    <location>
        <position position="306"/>
    </location>
    <ligand>
        <name>L-glutamine</name>
        <dbReference type="ChEBI" id="CHEBI:58359"/>
    </ligand>
</feature>
<feature type="binding site" evidence="1">
    <location>
        <position position="441"/>
    </location>
    <ligand>
        <name>L-glutamine</name>
        <dbReference type="ChEBI" id="CHEBI:58359"/>
    </ligand>
</feature>
<feature type="binding site" evidence="1">
    <location>
        <position position="460"/>
    </location>
    <ligand>
        <name>ATP</name>
        <dbReference type="ChEBI" id="CHEBI:30616"/>
    </ligand>
</feature>
<feature type="binding site" evidence="1">
    <location>
        <begin position="489"/>
        <end position="490"/>
    </location>
    <ligand>
        <name>ATP</name>
        <dbReference type="ChEBI" id="CHEBI:30616"/>
    </ligand>
</feature>
<feature type="binding site" evidence="1">
    <location>
        <begin position="497"/>
        <end position="499"/>
    </location>
    <ligand>
        <name>ATP</name>
        <dbReference type="ChEBI" id="CHEBI:30616"/>
    </ligand>
</feature>
<dbReference type="EC" id="6.1.1.18" evidence="2"/>
<dbReference type="EMBL" id="AE014297">
    <property type="protein sequence ID" value="AAF56434.2"/>
    <property type="molecule type" value="Genomic_DNA"/>
</dbReference>
<dbReference type="EMBL" id="AF145668">
    <property type="protein sequence ID" value="AAD38643.1"/>
    <property type="molecule type" value="mRNA"/>
</dbReference>
<dbReference type="RefSeq" id="NP_524841.1">
    <property type="nucleotide sequence ID" value="NM_080102.5"/>
</dbReference>
<dbReference type="SMR" id="Q9Y105"/>
<dbReference type="BioGRID" id="69882">
    <property type="interactions" value="8"/>
</dbReference>
<dbReference type="DIP" id="DIP-18324N"/>
<dbReference type="FunCoup" id="Q9Y105">
    <property type="interactions" value="2188"/>
</dbReference>
<dbReference type="IntAct" id="Q9Y105">
    <property type="interactions" value="97"/>
</dbReference>
<dbReference type="STRING" id="7227.FBpp0084240"/>
<dbReference type="PaxDb" id="7227-FBpp0084240"/>
<dbReference type="EnsemblMetazoa" id="FBtr0084866">
    <property type="protein sequence ID" value="FBpp0084240"/>
    <property type="gene ID" value="FBgn0027090"/>
</dbReference>
<dbReference type="GeneID" id="45786"/>
<dbReference type="KEGG" id="dme:Dmel_CG10506"/>
<dbReference type="AGR" id="FB:FBgn0027090"/>
<dbReference type="CTD" id="45786"/>
<dbReference type="FlyBase" id="FBgn0027090">
    <property type="gene designation" value="GlnRS"/>
</dbReference>
<dbReference type="VEuPathDB" id="VectorBase:FBgn0027090"/>
<dbReference type="eggNOG" id="KOG1148">
    <property type="taxonomic scope" value="Eukaryota"/>
</dbReference>
<dbReference type="GeneTree" id="ENSGT00940000168831"/>
<dbReference type="HOGENOM" id="CLU_001882_2_3_1"/>
<dbReference type="InParanoid" id="Q9Y105"/>
<dbReference type="OMA" id="TWCIYPM"/>
<dbReference type="OrthoDB" id="10250478at2759"/>
<dbReference type="PhylomeDB" id="Q9Y105"/>
<dbReference type="Reactome" id="R-DME-9856649">
    <property type="pathway name" value="Transcriptional and post-translational regulation of MITF-M expression and activity"/>
</dbReference>
<dbReference type="BioGRID-ORCS" id="45786">
    <property type="hits" value="1 hit in 1 CRISPR screen"/>
</dbReference>
<dbReference type="GenomeRNAi" id="45786"/>
<dbReference type="PRO" id="PR:Q9Y105"/>
<dbReference type="Proteomes" id="UP000000803">
    <property type="component" value="Chromosome 3R"/>
</dbReference>
<dbReference type="Bgee" id="FBgn0027090">
    <property type="expression patterns" value="Expressed in oviduct (Drosophila) and 97 other cell types or tissues"/>
</dbReference>
<dbReference type="GO" id="GO:0017101">
    <property type="term" value="C:aminoacyl-tRNA synthetase multienzyme complex"/>
    <property type="evidence" value="ECO:0000314"/>
    <property type="project" value="FlyBase"/>
</dbReference>
<dbReference type="GO" id="GO:0005737">
    <property type="term" value="C:cytoplasm"/>
    <property type="evidence" value="ECO:0000304"/>
    <property type="project" value="FlyBase"/>
</dbReference>
<dbReference type="GO" id="GO:0005829">
    <property type="term" value="C:cytosol"/>
    <property type="evidence" value="ECO:0000318"/>
    <property type="project" value="GO_Central"/>
</dbReference>
<dbReference type="GO" id="GO:0005524">
    <property type="term" value="F:ATP binding"/>
    <property type="evidence" value="ECO:0007669"/>
    <property type="project" value="UniProtKB-KW"/>
</dbReference>
<dbReference type="GO" id="GO:0004819">
    <property type="term" value="F:glutamine-tRNA ligase activity"/>
    <property type="evidence" value="ECO:0000318"/>
    <property type="project" value="GO_Central"/>
</dbReference>
<dbReference type="GO" id="GO:0048813">
    <property type="term" value="P:dendrite morphogenesis"/>
    <property type="evidence" value="ECO:0000315"/>
    <property type="project" value="FlyBase"/>
</dbReference>
<dbReference type="GO" id="GO:0006425">
    <property type="term" value="P:glutaminyl-tRNA aminoacylation"/>
    <property type="evidence" value="ECO:0000318"/>
    <property type="project" value="GO_Central"/>
</dbReference>
<dbReference type="CDD" id="cd00807">
    <property type="entry name" value="GlnRS_core"/>
    <property type="match status" value="1"/>
</dbReference>
<dbReference type="FunFam" id="1.10.10.2420:FF:000001">
    <property type="entry name" value="Glutamine--tRNA ligase cytoplasmic"/>
    <property type="match status" value="1"/>
</dbReference>
<dbReference type="FunFam" id="1.10.8.1290:FF:000002">
    <property type="entry name" value="Glutamine--tRNA ligase cytoplasmic"/>
    <property type="match status" value="1"/>
</dbReference>
<dbReference type="FunFam" id="3.40.50.620:FF:000049">
    <property type="entry name" value="Probable glutamine--tRNA ligase"/>
    <property type="match status" value="1"/>
</dbReference>
<dbReference type="FunFam" id="2.40.240.10:FF:000008">
    <property type="entry name" value="probable glutamine--tRNA ligase"/>
    <property type="match status" value="1"/>
</dbReference>
<dbReference type="FunFam" id="2.40.240.10:FF:000034">
    <property type="entry name" value="probable glutamine--tRNA ligase"/>
    <property type="match status" value="1"/>
</dbReference>
<dbReference type="Gene3D" id="1.10.10.2420">
    <property type="match status" value="1"/>
</dbReference>
<dbReference type="Gene3D" id="1.10.8.1290">
    <property type="entry name" value="Glutaminyl-tRNA synthetase, non-specific RNA binding region part 1, domain 1"/>
    <property type="match status" value="1"/>
</dbReference>
<dbReference type="Gene3D" id="3.40.50.620">
    <property type="entry name" value="HUPs"/>
    <property type="match status" value="1"/>
</dbReference>
<dbReference type="Gene3D" id="2.40.240.10">
    <property type="entry name" value="Ribosomal Protein L25, Chain P"/>
    <property type="match status" value="2"/>
</dbReference>
<dbReference type="InterPro" id="IPR001412">
    <property type="entry name" value="aa-tRNA-synth_I_CS"/>
</dbReference>
<dbReference type="InterPro" id="IPR004514">
    <property type="entry name" value="Gln-tRNA-synth"/>
</dbReference>
<dbReference type="InterPro" id="IPR007638">
    <property type="entry name" value="Gln-tRNA-synth_Ib_RNA-bd_2"/>
</dbReference>
<dbReference type="InterPro" id="IPR007639">
    <property type="entry name" value="Gln-tRNA-synth_Ib_RNA-bd_N"/>
</dbReference>
<dbReference type="InterPro" id="IPR042558">
    <property type="entry name" value="Gln-tRNA-synth_Ib_RNA-bd_N_1"/>
</dbReference>
<dbReference type="InterPro" id="IPR042559">
    <property type="entry name" value="Gln-tRNA-synth_Ib_RNA-bd_N_2"/>
</dbReference>
<dbReference type="InterPro" id="IPR050132">
    <property type="entry name" value="Gln/Glu-tRNA_Ligase"/>
</dbReference>
<dbReference type="InterPro" id="IPR000924">
    <property type="entry name" value="Glu/Gln-tRNA-synth"/>
</dbReference>
<dbReference type="InterPro" id="IPR020058">
    <property type="entry name" value="Glu/Gln-tRNA-synth_Ib_cat-dom"/>
</dbReference>
<dbReference type="InterPro" id="IPR020059">
    <property type="entry name" value="Glu/Gln-tRNA-synth_Ib_codon-bd"/>
</dbReference>
<dbReference type="InterPro" id="IPR020056">
    <property type="entry name" value="Rbsml_bL25/Gln-tRNA_synth_N"/>
</dbReference>
<dbReference type="InterPro" id="IPR011035">
    <property type="entry name" value="Ribosomal_bL25/Gln-tRNA_synth"/>
</dbReference>
<dbReference type="InterPro" id="IPR014729">
    <property type="entry name" value="Rossmann-like_a/b/a_fold"/>
</dbReference>
<dbReference type="InterPro" id="IPR049437">
    <property type="entry name" value="tRNA-synt_1c_C2"/>
</dbReference>
<dbReference type="NCBIfam" id="TIGR00440">
    <property type="entry name" value="glnS"/>
    <property type="match status" value="1"/>
</dbReference>
<dbReference type="PANTHER" id="PTHR43097:SF4">
    <property type="entry name" value="GLUTAMINE--TRNA LIGASE"/>
    <property type="match status" value="1"/>
</dbReference>
<dbReference type="PANTHER" id="PTHR43097">
    <property type="entry name" value="GLUTAMINE-TRNA LIGASE"/>
    <property type="match status" value="1"/>
</dbReference>
<dbReference type="Pfam" id="PF00749">
    <property type="entry name" value="tRNA-synt_1c"/>
    <property type="match status" value="1"/>
</dbReference>
<dbReference type="Pfam" id="PF03950">
    <property type="entry name" value="tRNA-synt_1c_C"/>
    <property type="match status" value="1"/>
</dbReference>
<dbReference type="Pfam" id="PF20974">
    <property type="entry name" value="tRNA-synt_1c_C2"/>
    <property type="match status" value="1"/>
</dbReference>
<dbReference type="Pfam" id="PF04558">
    <property type="entry name" value="tRNA_synt_1c_R1"/>
    <property type="match status" value="1"/>
</dbReference>
<dbReference type="Pfam" id="PF04557">
    <property type="entry name" value="tRNA_synt_1c_R2"/>
    <property type="match status" value="1"/>
</dbReference>
<dbReference type="PRINTS" id="PR00987">
    <property type="entry name" value="TRNASYNTHGLU"/>
</dbReference>
<dbReference type="SUPFAM" id="SSF52374">
    <property type="entry name" value="Nucleotidylyl transferase"/>
    <property type="match status" value="1"/>
</dbReference>
<dbReference type="SUPFAM" id="SSF50715">
    <property type="entry name" value="Ribosomal protein L25-like"/>
    <property type="match status" value="1"/>
</dbReference>
<dbReference type="PROSITE" id="PS00178">
    <property type="entry name" value="AA_TRNA_LIGASE_I"/>
    <property type="match status" value="1"/>
</dbReference>
<name>SYQ_DROME</name>
<accession>Q9Y105</accession>
<accession>Q9VBU3</accession>
<proteinExistence type="evidence at transcript level"/>
<protein>
    <recommendedName>
        <fullName>Probable glutamine--tRNA ligase</fullName>
        <ecNumber evidence="2">6.1.1.18</ecNumber>
    </recommendedName>
    <alternativeName>
        <fullName evidence="5">Glutaminyl-tRNA synthetase</fullName>
    </alternativeName>
</protein>
<organism>
    <name type="scientific">Drosophila melanogaster</name>
    <name type="common">Fruit fly</name>
    <dbReference type="NCBI Taxonomy" id="7227"/>
    <lineage>
        <taxon>Eukaryota</taxon>
        <taxon>Metazoa</taxon>
        <taxon>Ecdysozoa</taxon>
        <taxon>Arthropoda</taxon>
        <taxon>Hexapoda</taxon>
        <taxon>Insecta</taxon>
        <taxon>Pterygota</taxon>
        <taxon>Neoptera</taxon>
        <taxon>Endopterygota</taxon>
        <taxon>Diptera</taxon>
        <taxon>Brachycera</taxon>
        <taxon>Muscomorpha</taxon>
        <taxon>Ephydroidea</taxon>
        <taxon>Drosophilidae</taxon>
        <taxon>Drosophila</taxon>
        <taxon>Sophophora</taxon>
    </lineage>
</organism>
<sequence length="778" mass="87508">MAGDDLIAKFQALGMSEQKAKETLKNANVTKNLQLSLAAAGSATLSDGTGMLIYHMATKLKPQTADHLPLLVRYIVEHKLDNTQRVDAALEYLLKCGQSLNANIDLQALEKECGVGVVVTPEQIERTVQAKIKASYKEALLEQRYHFNSFKILQDVRGELKWADAKSVKAAIDVEIFDLLGPKTEADLKPQTKANDKPKAAKPKAEVTPAAQTAEAASDGATTISELMKTKVHFHAPGENFKADGYVVTEHTERLLKEHLARTGGKVHTRFPPEPNGILHIGHAKAININFGYAAAHDGVCYLRYDDTNPEKEEEKFFLAIKEMVEWLGYKPFKITYSSDNFQQLYEWAVVLINKGLAYVCHQKAEELKGFNPKPSPWRERPIEESLRLFEDMKRGKIDEGAATLRMKVTLEEGKMDPVAYRIKFISHHRTGSDWCIYPTYDYTHCLCDSLEDITHSLCTKEFQSRRSSYYWLCNALGIYCPVQWEYGRLNMNYALVSKRKIAKLITEQIVHDWDDPRLFTLTALRRRGFPAEAINNFCAQMGVTGAQIAVDPAMLEAAVRDVLNVTAPRRLVVLEPLKVTIKNFPHAAPVQLEVPDFPQNPQQGTHKITLDKVIYIEQGDFKLEPEKGYRRLAPKQSVGLRHAGLVISVDEIVKDPATGQVVELICTSQPAEQAEKPKAFVQWVSQPIQLEVRLYEQLFKHKNPEDPNEVPGGFLSDISEQSMSVVVAFADRALNQAKVYDKFQFERIGFFSVDPDTSANHLVFNRTVGLKEDAGKK</sequence>
<comment type="catalytic activity">
    <reaction evidence="2">
        <text>tRNA(Gln) + L-glutamine + ATP = L-glutaminyl-tRNA(Gln) + AMP + diphosphate</text>
        <dbReference type="Rhea" id="RHEA:20121"/>
        <dbReference type="Rhea" id="RHEA-COMP:9662"/>
        <dbReference type="Rhea" id="RHEA-COMP:9681"/>
        <dbReference type="ChEBI" id="CHEBI:30616"/>
        <dbReference type="ChEBI" id="CHEBI:33019"/>
        <dbReference type="ChEBI" id="CHEBI:58359"/>
        <dbReference type="ChEBI" id="CHEBI:78442"/>
        <dbReference type="ChEBI" id="CHEBI:78521"/>
        <dbReference type="ChEBI" id="CHEBI:456215"/>
        <dbReference type="EC" id="6.1.1.18"/>
    </reaction>
</comment>
<comment type="similarity">
    <text evidence="4">Belongs to the class-I aminoacyl-tRNA synthetase family.</text>
</comment>
<reference key="1">
    <citation type="journal article" date="2000" name="Science">
        <title>The genome sequence of Drosophila melanogaster.</title>
        <authorList>
            <person name="Adams M.D."/>
            <person name="Celniker S.E."/>
            <person name="Holt R.A."/>
            <person name="Evans C.A."/>
            <person name="Gocayne J.D."/>
            <person name="Amanatides P.G."/>
            <person name="Scherer S.E."/>
            <person name="Li P.W."/>
            <person name="Hoskins R.A."/>
            <person name="Galle R.F."/>
            <person name="George R.A."/>
            <person name="Lewis S.E."/>
            <person name="Richards S."/>
            <person name="Ashburner M."/>
            <person name="Henderson S.N."/>
            <person name="Sutton G.G."/>
            <person name="Wortman J.R."/>
            <person name="Yandell M.D."/>
            <person name="Zhang Q."/>
            <person name="Chen L.X."/>
            <person name="Brandon R.C."/>
            <person name="Rogers Y.-H.C."/>
            <person name="Blazej R.G."/>
            <person name="Champe M."/>
            <person name="Pfeiffer B.D."/>
            <person name="Wan K.H."/>
            <person name="Doyle C."/>
            <person name="Baxter E.G."/>
            <person name="Helt G."/>
            <person name="Nelson C.R."/>
            <person name="Miklos G.L.G."/>
            <person name="Abril J.F."/>
            <person name="Agbayani A."/>
            <person name="An H.-J."/>
            <person name="Andrews-Pfannkoch C."/>
            <person name="Baldwin D."/>
            <person name="Ballew R.M."/>
            <person name="Basu A."/>
            <person name="Baxendale J."/>
            <person name="Bayraktaroglu L."/>
            <person name="Beasley E.M."/>
            <person name="Beeson K.Y."/>
            <person name="Benos P.V."/>
            <person name="Berman B.P."/>
            <person name="Bhandari D."/>
            <person name="Bolshakov S."/>
            <person name="Borkova D."/>
            <person name="Botchan M.R."/>
            <person name="Bouck J."/>
            <person name="Brokstein P."/>
            <person name="Brottier P."/>
            <person name="Burtis K.C."/>
            <person name="Busam D.A."/>
            <person name="Butler H."/>
            <person name="Cadieu E."/>
            <person name="Center A."/>
            <person name="Chandra I."/>
            <person name="Cherry J.M."/>
            <person name="Cawley S."/>
            <person name="Dahlke C."/>
            <person name="Davenport L.B."/>
            <person name="Davies P."/>
            <person name="de Pablos B."/>
            <person name="Delcher A."/>
            <person name="Deng Z."/>
            <person name="Mays A.D."/>
            <person name="Dew I."/>
            <person name="Dietz S.M."/>
            <person name="Dodson K."/>
            <person name="Doup L.E."/>
            <person name="Downes M."/>
            <person name="Dugan-Rocha S."/>
            <person name="Dunkov B.C."/>
            <person name="Dunn P."/>
            <person name="Durbin K.J."/>
            <person name="Evangelista C.C."/>
            <person name="Ferraz C."/>
            <person name="Ferriera S."/>
            <person name="Fleischmann W."/>
            <person name="Fosler C."/>
            <person name="Gabrielian A.E."/>
            <person name="Garg N.S."/>
            <person name="Gelbart W.M."/>
            <person name="Glasser K."/>
            <person name="Glodek A."/>
            <person name="Gong F."/>
            <person name="Gorrell J.H."/>
            <person name="Gu Z."/>
            <person name="Guan P."/>
            <person name="Harris M."/>
            <person name="Harris N.L."/>
            <person name="Harvey D.A."/>
            <person name="Heiman T.J."/>
            <person name="Hernandez J.R."/>
            <person name="Houck J."/>
            <person name="Hostin D."/>
            <person name="Houston K.A."/>
            <person name="Howland T.J."/>
            <person name="Wei M.-H."/>
            <person name="Ibegwam C."/>
            <person name="Jalali M."/>
            <person name="Kalush F."/>
            <person name="Karpen G.H."/>
            <person name="Ke Z."/>
            <person name="Kennison J.A."/>
            <person name="Ketchum K.A."/>
            <person name="Kimmel B.E."/>
            <person name="Kodira C.D."/>
            <person name="Kraft C.L."/>
            <person name="Kravitz S."/>
            <person name="Kulp D."/>
            <person name="Lai Z."/>
            <person name="Lasko P."/>
            <person name="Lei Y."/>
            <person name="Levitsky A.A."/>
            <person name="Li J.H."/>
            <person name="Li Z."/>
            <person name="Liang Y."/>
            <person name="Lin X."/>
            <person name="Liu X."/>
            <person name="Mattei B."/>
            <person name="McIntosh T.C."/>
            <person name="McLeod M.P."/>
            <person name="McPherson D."/>
            <person name="Merkulov G."/>
            <person name="Milshina N.V."/>
            <person name="Mobarry C."/>
            <person name="Morris J."/>
            <person name="Moshrefi A."/>
            <person name="Mount S.M."/>
            <person name="Moy M."/>
            <person name="Murphy B."/>
            <person name="Murphy L."/>
            <person name="Muzny D.M."/>
            <person name="Nelson D.L."/>
            <person name="Nelson D.R."/>
            <person name="Nelson K.A."/>
            <person name="Nixon K."/>
            <person name="Nusskern D.R."/>
            <person name="Pacleb J.M."/>
            <person name="Palazzolo M."/>
            <person name="Pittman G.S."/>
            <person name="Pan S."/>
            <person name="Pollard J."/>
            <person name="Puri V."/>
            <person name="Reese M.G."/>
            <person name="Reinert K."/>
            <person name="Remington K."/>
            <person name="Saunders R.D.C."/>
            <person name="Scheeler F."/>
            <person name="Shen H."/>
            <person name="Shue B.C."/>
            <person name="Siden-Kiamos I."/>
            <person name="Simpson M."/>
            <person name="Skupski M.P."/>
            <person name="Smith T.J."/>
            <person name="Spier E."/>
            <person name="Spradling A.C."/>
            <person name="Stapleton M."/>
            <person name="Strong R."/>
            <person name="Sun E."/>
            <person name="Svirskas R."/>
            <person name="Tector C."/>
            <person name="Turner R."/>
            <person name="Venter E."/>
            <person name="Wang A.H."/>
            <person name="Wang X."/>
            <person name="Wang Z.-Y."/>
            <person name="Wassarman D.A."/>
            <person name="Weinstock G.M."/>
            <person name="Weissenbach J."/>
            <person name="Williams S.M."/>
            <person name="Woodage T."/>
            <person name="Worley K.C."/>
            <person name="Wu D."/>
            <person name="Yang S."/>
            <person name="Yao Q.A."/>
            <person name="Ye J."/>
            <person name="Yeh R.-F."/>
            <person name="Zaveri J.S."/>
            <person name="Zhan M."/>
            <person name="Zhang G."/>
            <person name="Zhao Q."/>
            <person name="Zheng L."/>
            <person name="Zheng X.H."/>
            <person name="Zhong F.N."/>
            <person name="Zhong W."/>
            <person name="Zhou X."/>
            <person name="Zhu S.C."/>
            <person name="Zhu X."/>
            <person name="Smith H.O."/>
            <person name="Gibbs R.A."/>
            <person name="Myers E.W."/>
            <person name="Rubin G.M."/>
            <person name="Venter J.C."/>
        </authorList>
    </citation>
    <scope>NUCLEOTIDE SEQUENCE [LARGE SCALE GENOMIC DNA]</scope>
    <source>
        <strain>Berkeley</strain>
    </source>
</reference>
<reference key="2">
    <citation type="journal article" date="2002" name="Genome Biol.">
        <title>Annotation of the Drosophila melanogaster euchromatic genome: a systematic review.</title>
        <authorList>
            <person name="Misra S."/>
            <person name="Crosby M.A."/>
            <person name="Mungall C.J."/>
            <person name="Matthews B.B."/>
            <person name="Campbell K.S."/>
            <person name="Hradecky P."/>
            <person name="Huang Y."/>
            <person name="Kaminker J.S."/>
            <person name="Millburn G.H."/>
            <person name="Prochnik S.E."/>
            <person name="Smith C.D."/>
            <person name="Tupy J.L."/>
            <person name="Whitfield E.J."/>
            <person name="Bayraktaroglu L."/>
            <person name="Berman B.P."/>
            <person name="Bettencourt B.R."/>
            <person name="Celniker S.E."/>
            <person name="de Grey A.D.N.J."/>
            <person name="Drysdale R.A."/>
            <person name="Harris N.L."/>
            <person name="Richter J."/>
            <person name="Russo S."/>
            <person name="Schroeder A.J."/>
            <person name="Shu S.Q."/>
            <person name="Stapleton M."/>
            <person name="Yamada C."/>
            <person name="Ashburner M."/>
            <person name="Gelbart W.M."/>
            <person name="Rubin G.M."/>
            <person name="Lewis S.E."/>
        </authorList>
    </citation>
    <scope>GENOME REANNOTATION</scope>
    <source>
        <strain>Berkeley</strain>
    </source>
</reference>
<reference key="3">
    <citation type="journal article" date="2000" name="Science">
        <title>A Drosophila complementary DNA resource.</title>
        <authorList>
            <person name="Rubin G.M."/>
            <person name="Hong L."/>
            <person name="Brokstein P."/>
            <person name="Evans-Holm M."/>
            <person name="Frise E."/>
            <person name="Stapleton M."/>
            <person name="Harvey D.A."/>
        </authorList>
    </citation>
    <scope>NUCLEOTIDE SEQUENCE [LARGE SCALE MRNA]</scope>
    <source>
        <strain>Berkeley</strain>
        <tissue>Head</tissue>
    </source>
</reference>
<gene>
    <name evidence="5" type="primary">GlnRS</name>
    <name evidence="5" type="synonym">Aats-gln</name>
    <name evidence="5" type="ORF">CG10506</name>
</gene>